<evidence type="ECO:0000305" key="1"/>
<gene>
    <name type="primary">pta</name>
    <name type="synonym">ptaA</name>
    <name type="ordered locus">Tthe_1502</name>
</gene>
<reference key="1">
    <citation type="submission" date="1996-06" db="EMBL/GenBank/DDBJ databases">
        <authorList>
            <person name="Joerges A."/>
            <person name="Bronnenmeier K."/>
            <person name="Lottspeich F."/>
            <person name="Staudenbauer W.L."/>
        </authorList>
    </citation>
    <scope>NUCLEOTIDE SEQUENCE [GENOMIC DNA]</scope>
    <source>
        <strain>ATCC 7956 / DSM 571 / NCIMB 9385 / NCA 3814 / NCTC 13789 / WDCM 00135 / 2032</strain>
    </source>
</reference>
<reference key="2">
    <citation type="submission" date="1998-03" db="EMBL/GenBank/DDBJ databases">
        <authorList>
            <person name="van Rinsum A."/>
        </authorList>
    </citation>
    <scope>NUCLEOTIDE SEQUENCE [GENOMIC DNA]</scope>
    <source>
        <strain>ATCC 7956 / DSM 571 / NCIMB 9385 / NCA 3814 / NCTC 13789 / WDCM 00135 / 2032</strain>
    </source>
</reference>
<reference key="3">
    <citation type="submission" date="2010-08" db="EMBL/GenBank/DDBJ databases">
        <title>Complete sequence of Thermoanaerobacterium thermosaccharolyticum DSM 571.</title>
        <authorList>
            <consortium name="US DOE Joint Genome Institute"/>
            <person name="Lucas S."/>
            <person name="Copeland A."/>
            <person name="Lapidus A."/>
            <person name="Cheng J.-F."/>
            <person name="Bruce D."/>
            <person name="Goodwin L."/>
            <person name="Pitluck S."/>
            <person name="Teshima H."/>
            <person name="Detter J.C."/>
            <person name="Han C."/>
            <person name="Tapia R."/>
            <person name="Land M."/>
            <person name="Hauser L."/>
            <person name="Chang Y.-J."/>
            <person name="Jeffries C."/>
            <person name="Kyrpides N."/>
            <person name="Ivanova N."/>
            <person name="Mikhailova N."/>
            <person name="Hemme C.L."/>
            <person name="Woyke T."/>
        </authorList>
    </citation>
    <scope>NUCLEOTIDE SEQUENCE [LARGE SCALE GENOMIC DNA]</scope>
    <source>
        <strain>ATCC 7956 / DSM 571 / NCIMB 9385 / NCA 3814 / NCTC 13789 / WDCM 00135 / 2032</strain>
    </source>
</reference>
<feature type="chain" id="PRO_0000179127" description="Phosphate acetyltransferase">
    <location>
        <begin position="1"/>
        <end position="328"/>
    </location>
</feature>
<feature type="sequence conflict" description="In Ref. 2; CAA06174." evidence="1" ref="2">
    <original>AA</original>
    <variation>GP</variation>
    <location>
        <begin position="31"/>
        <end position="32"/>
    </location>
</feature>
<feature type="sequence conflict" description="In Ref. 1; CAA95985." evidence="1" ref="1">
    <original>I</original>
    <variation>L</variation>
    <location>
        <position position="91"/>
    </location>
</feature>
<feature type="sequence conflict" description="In Ref. 1; CAA95985." evidence="1" ref="1">
    <original>EGYAD</original>
    <variation>RRLCS</variation>
    <location>
        <begin position="113"/>
        <end position="117"/>
    </location>
</feature>
<feature type="sequence conflict" description="In Ref. 1; CAA95985." evidence="1" ref="1">
    <original>H</original>
    <variation>D</variation>
    <location>
        <position position="125"/>
    </location>
</feature>
<feature type="sequence conflict" description="In Ref. 1; CAA95985." evidence="1" ref="1">
    <original>I</original>
    <variation>N</variation>
    <location>
        <position position="137"/>
    </location>
</feature>
<feature type="sequence conflict" description="In Ref. 1; CAA95985 and 2; CAA06174." evidence="1" ref="1 2">
    <original>AL</original>
    <variation>DV</variation>
    <location>
        <begin position="247"/>
        <end position="248"/>
    </location>
</feature>
<sequence length="328" mass="34945">MSIIQSIIEKAKSNKKKIVLPEGAEPRTLKAADIVLKEGIADLVLLGNADEIRNAAEGLDISKAEIIDPLKSEKFDKYATDFYELRKNKGITLEKAKETIKDNIYFGCMMVKEGYADGLVSGAIHATADLLRPAFQIVKTAPGAKIVSSFFIMEVPNCEFGENGVFLFADCAVNPSPNAEELASIAVQSANTAKTLLGMEPRVAMLSFSTKGSASHELVDKVRTATEIAKNLIPDVAIDGELQLDAALVKEVAELKAPGSPVAGRANVLIFPDLQAGNIGYKLVQRLAKANAIGPITQGMGAPVNDLSRGCSYKDIVDVIATTAVQAQ</sequence>
<proteinExistence type="inferred from homology"/>
<keyword id="KW-0012">Acyltransferase</keyword>
<keyword id="KW-0963">Cytoplasm</keyword>
<keyword id="KW-1185">Reference proteome</keyword>
<keyword id="KW-0808">Transferase</keyword>
<organism>
    <name type="scientific">Thermoanaerobacterium thermosaccharolyticum (strain ATCC 7956 / DSM 571 / NCIMB 9385 / NCA 3814 / NCTC 13789 / WDCM 00135 / 2032)</name>
    <name type="common">Clostridium thermosaccharolyticum</name>
    <dbReference type="NCBI Taxonomy" id="580327"/>
    <lineage>
        <taxon>Bacteria</taxon>
        <taxon>Bacillati</taxon>
        <taxon>Bacillota</taxon>
        <taxon>Clostridia</taxon>
        <taxon>Thermoanaerobacterales</taxon>
        <taxon>Thermoanaerobacteraceae</taxon>
        <taxon>Thermoanaerobacterium</taxon>
    </lineage>
</organism>
<dbReference type="EC" id="2.3.1.8"/>
<dbReference type="EMBL" id="Z71384">
    <property type="protein sequence ID" value="CAA95985.1"/>
    <property type="molecule type" value="Genomic_DNA"/>
</dbReference>
<dbReference type="EMBL" id="AJ004870">
    <property type="protein sequence ID" value="CAA06174.1"/>
    <property type="molecule type" value="Genomic_DNA"/>
</dbReference>
<dbReference type="EMBL" id="CP002171">
    <property type="protein sequence ID" value="ADL69012.1"/>
    <property type="molecule type" value="Genomic_DNA"/>
</dbReference>
<dbReference type="RefSeq" id="WP_013297979.1">
    <property type="nucleotide sequence ID" value="NC_014410.1"/>
</dbReference>
<dbReference type="SMR" id="Q59330"/>
<dbReference type="STRING" id="580327.Tthe_1502"/>
<dbReference type="GeneID" id="93864341"/>
<dbReference type="KEGG" id="ttm:Tthe_1502"/>
<dbReference type="eggNOG" id="COG0280">
    <property type="taxonomic scope" value="Bacteria"/>
</dbReference>
<dbReference type="HOGENOM" id="CLU_019723_0_1_9"/>
<dbReference type="OrthoDB" id="9805787at2"/>
<dbReference type="UniPathway" id="UPA00340">
    <property type="reaction ID" value="UER00459"/>
</dbReference>
<dbReference type="Proteomes" id="UP000001626">
    <property type="component" value="Chromosome"/>
</dbReference>
<dbReference type="GO" id="GO:0005737">
    <property type="term" value="C:cytoplasm"/>
    <property type="evidence" value="ECO:0007669"/>
    <property type="project" value="UniProtKB-SubCell"/>
</dbReference>
<dbReference type="GO" id="GO:0008959">
    <property type="term" value="F:phosphate acetyltransferase activity"/>
    <property type="evidence" value="ECO:0007669"/>
    <property type="project" value="UniProtKB-EC"/>
</dbReference>
<dbReference type="GO" id="GO:0006085">
    <property type="term" value="P:acetyl-CoA biosynthetic process"/>
    <property type="evidence" value="ECO:0007669"/>
    <property type="project" value="UniProtKB-UniPathway"/>
</dbReference>
<dbReference type="Gene3D" id="3.40.50.10950">
    <property type="match status" value="1"/>
</dbReference>
<dbReference type="Gene3D" id="3.40.50.10750">
    <property type="entry name" value="Isocitrate/Isopropylmalate dehydrogenase-like"/>
    <property type="match status" value="1"/>
</dbReference>
<dbReference type="InterPro" id="IPR012147">
    <property type="entry name" value="P_Ac_Bu_trans"/>
</dbReference>
<dbReference type="InterPro" id="IPR004614">
    <property type="entry name" value="P_AcTrfase"/>
</dbReference>
<dbReference type="InterPro" id="IPR042113">
    <property type="entry name" value="P_AcTrfase_dom1"/>
</dbReference>
<dbReference type="InterPro" id="IPR042112">
    <property type="entry name" value="P_AcTrfase_dom2"/>
</dbReference>
<dbReference type="InterPro" id="IPR050500">
    <property type="entry name" value="Phos_Acetyltrans/Butyryltrans"/>
</dbReference>
<dbReference type="InterPro" id="IPR002505">
    <property type="entry name" value="PTA_PTB"/>
</dbReference>
<dbReference type="NCBIfam" id="NF004167">
    <property type="entry name" value="PRK05632.1"/>
    <property type="match status" value="1"/>
</dbReference>
<dbReference type="NCBIfam" id="NF007233">
    <property type="entry name" value="PRK09653.1"/>
    <property type="match status" value="1"/>
</dbReference>
<dbReference type="NCBIfam" id="TIGR00651">
    <property type="entry name" value="pta"/>
    <property type="match status" value="1"/>
</dbReference>
<dbReference type="PANTHER" id="PTHR43356">
    <property type="entry name" value="PHOSPHATE ACETYLTRANSFERASE"/>
    <property type="match status" value="1"/>
</dbReference>
<dbReference type="PANTHER" id="PTHR43356:SF3">
    <property type="entry name" value="PHOSPHATE ACETYLTRANSFERASE"/>
    <property type="match status" value="1"/>
</dbReference>
<dbReference type="Pfam" id="PF01515">
    <property type="entry name" value="PTA_PTB"/>
    <property type="match status" value="1"/>
</dbReference>
<dbReference type="PIRSF" id="PIRSF000428">
    <property type="entry name" value="P_Ac_trans"/>
    <property type="match status" value="1"/>
</dbReference>
<dbReference type="SUPFAM" id="SSF53659">
    <property type="entry name" value="Isocitrate/Isopropylmalate dehydrogenase-like"/>
    <property type="match status" value="1"/>
</dbReference>
<comment type="catalytic activity">
    <reaction>
        <text>acetyl-CoA + phosphate = acetyl phosphate + CoA</text>
        <dbReference type="Rhea" id="RHEA:19521"/>
        <dbReference type="ChEBI" id="CHEBI:22191"/>
        <dbReference type="ChEBI" id="CHEBI:43474"/>
        <dbReference type="ChEBI" id="CHEBI:57287"/>
        <dbReference type="ChEBI" id="CHEBI:57288"/>
        <dbReference type="EC" id="2.3.1.8"/>
    </reaction>
</comment>
<comment type="pathway">
    <text>Metabolic intermediate biosynthesis; acetyl-CoA biosynthesis; acetyl-CoA from acetate: step 2/2.</text>
</comment>
<comment type="subcellular location">
    <subcellularLocation>
        <location evidence="1">Cytoplasm</location>
    </subcellularLocation>
</comment>
<comment type="similarity">
    <text evidence="1">Belongs to the phosphate acetyltransferase and butyryltransferase family.</text>
</comment>
<name>PTAS_THETC</name>
<protein>
    <recommendedName>
        <fullName>Phosphate acetyltransferase</fullName>
        <ecNumber>2.3.1.8</ecNumber>
    </recommendedName>
    <alternativeName>
        <fullName>Phosphotransacetylase</fullName>
    </alternativeName>
</protein>
<accession>Q59330</accession>
<accession>D9TNN7</accession>
<accession>O65980</accession>